<reference key="1">
    <citation type="journal article" date="2009" name="BMC Genomics">
        <title>Metabolic analysis of the soil microbe Dechloromonas aromatica str. RCB: indications of a surprisingly complex life-style and cryptic anaerobic pathways for aromatic degradation.</title>
        <authorList>
            <person name="Salinero K.K."/>
            <person name="Keller K."/>
            <person name="Feil W.S."/>
            <person name="Feil H."/>
            <person name="Trong S."/>
            <person name="Di Bartolo G."/>
            <person name="Lapidus A."/>
        </authorList>
    </citation>
    <scope>NUCLEOTIDE SEQUENCE [LARGE SCALE GENOMIC DNA]</scope>
    <source>
        <strain>RCB</strain>
    </source>
</reference>
<protein>
    <recommendedName>
        <fullName evidence="1">Ribonuclease H</fullName>
        <shortName evidence="1">RNase H</shortName>
        <ecNumber evidence="1">3.1.26.4</ecNumber>
    </recommendedName>
</protein>
<sequence>MTAEETVEIFTDGACKGNPGPGGWGAILRLGPHEKELWGGEKETTNNRMELTAAIRAIEALKRPIGGKIYTDSQYVMKGINEWIHGWKKNGWKTSDKKPVKNADLWQLLDAQVKLHKLEWIWVRGHSGHPENERADALANRGIEELKG</sequence>
<evidence type="ECO:0000255" key="1">
    <source>
        <dbReference type="HAMAP-Rule" id="MF_00042"/>
    </source>
</evidence>
<evidence type="ECO:0000255" key="2">
    <source>
        <dbReference type="PROSITE-ProRule" id="PRU00408"/>
    </source>
</evidence>
<evidence type="ECO:0000256" key="3">
    <source>
        <dbReference type="SAM" id="MobiDB-lite"/>
    </source>
</evidence>
<name>RNH_DECAR</name>
<feature type="chain" id="PRO_0000332587" description="Ribonuclease H">
    <location>
        <begin position="1"/>
        <end position="148"/>
    </location>
</feature>
<feature type="domain" description="RNase H type-1" evidence="2">
    <location>
        <begin position="3"/>
        <end position="144"/>
    </location>
</feature>
<feature type="region of interest" description="Disordered" evidence="3">
    <location>
        <begin position="129"/>
        <end position="148"/>
    </location>
</feature>
<feature type="binding site" evidence="1">
    <location>
        <position position="12"/>
    </location>
    <ligand>
        <name>Mg(2+)</name>
        <dbReference type="ChEBI" id="CHEBI:18420"/>
        <label>1</label>
    </ligand>
</feature>
<feature type="binding site" evidence="1">
    <location>
        <position position="12"/>
    </location>
    <ligand>
        <name>Mg(2+)</name>
        <dbReference type="ChEBI" id="CHEBI:18420"/>
        <label>2</label>
    </ligand>
</feature>
<feature type="binding site" evidence="1">
    <location>
        <position position="50"/>
    </location>
    <ligand>
        <name>Mg(2+)</name>
        <dbReference type="ChEBI" id="CHEBI:18420"/>
        <label>1</label>
    </ligand>
</feature>
<feature type="binding site" evidence="1">
    <location>
        <position position="72"/>
    </location>
    <ligand>
        <name>Mg(2+)</name>
        <dbReference type="ChEBI" id="CHEBI:18420"/>
        <label>1</label>
    </ligand>
</feature>
<feature type="binding site" evidence="1">
    <location>
        <position position="136"/>
    </location>
    <ligand>
        <name>Mg(2+)</name>
        <dbReference type="ChEBI" id="CHEBI:18420"/>
        <label>2</label>
    </ligand>
</feature>
<organism>
    <name type="scientific">Dechloromonas aromatica (strain RCB)</name>
    <dbReference type="NCBI Taxonomy" id="159087"/>
    <lineage>
        <taxon>Bacteria</taxon>
        <taxon>Pseudomonadati</taxon>
        <taxon>Pseudomonadota</taxon>
        <taxon>Betaproteobacteria</taxon>
        <taxon>Rhodocyclales</taxon>
        <taxon>Azonexaceae</taxon>
        <taxon>Dechloromonas</taxon>
    </lineage>
</organism>
<comment type="function">
    <text evidence="1">Endonuclease that specifically degrades the RNA of RNA-DNA hybrids.</text>
</comment>
<comment type="catalytic activity">
    <reaction evidence="1">
        <text>Endonucleolytic cleavage to 5'-phosphomonoester.</text>
        <dbReference type="EC" id="3.1.26.4"/>
    </reaction>
</comment>
<comment type="cofactor">
    <cofactor evidence="1">
        <name>Mg(2+)</name>
        <dbReference type="ChEBI" id="CHEBI:18420"/>
    </cofactor>
    <text evidence="1">Binds 1 Mg(2+) ion per subunit. May bind a second metal ion at a regulatory site, or after substrate binding.</text>
</comment>
<comment type="subunit">
    <text evidence="1">Monomer.</text>
</comment>
<comment type="subcellular location">
    <subcellularLocation>
        <location evidence="1">Cytoplasm</location>
    </subcellularLocation>
</comment>
<comment type="similarity">
    <text evidence="1">Belongs to the RNase H family.</text>
</comment>
<keyword id="KW-0963">Cytoplasm</keyword>
<keyword id="KW-0255">Endonuclease</keyword>
<keyword id="KW-0378">Hydrolase</keyword>
<keyword id="KW-0460">Magnesium</keyword>
<keyword id="KW-0479">Metal-binding</keyword>
<keyword id="KW-0540">Nuclease</keyword>
<gene>
    <name evidence="1" type="primary">rnhA</name>
    <name type="ordered locus">Daro_1593</name>
</gene>
<dbReference type="EC" id="3.1.26.4" evidence="1"/>
<dbReference type="EMBL" id="CP000089">
    <property type="protein sequence ID" value="AAZ46342.1"/>
    <property type="molecule type" value="Genomic_DNA"/>
</dbReference>
<dbReference type="SMR" id="Q47FN9"/>
<dbReference type="STRING" id="159087.Daro_1593"/>
<dbReference type="KEGG" id="dar:Daro_1593"/>
<dbReference type="eggNOG" id="COG0328">
    <property type="taxonomic scope" value="Bacteria"/>
</dbReference>
<dbReference type="HOGENOM" id="CLU_030894_6_0_4"/>
<dbReference type="OrthoDB" id="7845843at2"/>
<dbReference type="GO" id="GO:0005737">
    <property type="term" value="C:cytoplasm"/>
    <property type="evidence" value="ECO:0007669"/>
    <property type="project" value="UniProtKB-SubCell"/>
</dbReference>
<dbReference type="GO" id="GO:0000287">
    <property type="term" value="F:magnesium ion binding"/>
    <property type="evidence" value="ECO:0007669"/>
    <property type="project" value="UniProtKB-UniRule"/>
</dbReference>
<dbReference type="GO" id="GO:0003676">
    <property type="term" value="F:nucleic acid binding"/>
    <property type="evidence" value="ECO:0007669"/>
    <property type="project" value="InterPro"/>
</dbReference>
<dbReference type="GO" id="GO:0004523">
    <property type="term" value="F:RNA-DNA hybrid ribonuclease activity"/>
    <property type="evidence" value="ECO:0007669"/>
    <property type="project" value="UniProtKB-UniRule"/>
</dbReference>
<dbReference type="GO" id="GO:0043137">
    <property type="term" value="P:DNA replication, removal of RNA primer"/>
    <property type="evidence" value="ECO:0007669"/>
    <property type="project" value="TreeGrafter"/>
</dbReference>
<dbReference type="CDD" id="cd09278">
    <property type="entry name" value="RNase_HI_prokaryote_like"/>
    <property type="match status" value="1"/>
</dbReference>
<dbReference type="FunFam" id="3.30.420.10:FF:000089">
    <property type="entry name" value="Ribonuclease H"/>
    <property type="match status" value="1"/>
</dbReference>
<dbReference type="Gene3D" id="3.30.420.10">
    <property type="entry name" value="Ribonuclease H-like superfamily/Ribonuclease H"/>
    <property type="match status" value="1"/>
</dbReference>
<dbReference type="HAMAP" id="MF_00042">
    <property type="entry name" value="RNase_H"/>
    <property type="match status" value="1"/>
</dbReference>
<dbReference type="InterPro" id="IPR050092">
    <property type="entry name" value="RNase_H"/>
</dbReference>
<dbReference type="InterPro" id="IPR012337">
    <property type="entry name" value="RNaseH-like_sf"/>
</dbReference>
<dbReference type="InterPro" id="IPR002156">
    <property type="entry name" value="RNaseH_domain"/>
</dbReference>
<dbReference type="InterPro" id="IPR036397">
    <property type="entry name" value="RNaseH_sf"/>
</dbReference>
<dbReference type="InterPro" id="IPR022892">
    <property type="entry name" value="RNaseHI"/>
</dbReference>
<dbReference type="NCBIfam" id="NF001236">
    <property type="entry name" value="PRK00203.1"/>
    <property type="match status" value="1"/>
</dbReference>
<dbReference type="PANTHER" id="PTHR10642">
    <property type="entry name" value="RIBONUCLEASE H1"/>
    <property type="match status" value="1"/>
</dbReference>
<dbReference type="PANTHER" id="PTHR10642:SF26">
    <property type="entry name" value="RIBONUCLEASE H1"/>
    <property type="match status" value="1"/>
</dbReference>
<dbReference type="Pfam" id="PF00075">
    <property type="entry name" value="RNase_H"/>
    <property type="match status" value="1"/>
</dbReference>
<dbReference type="SUPFAM" id="SSF53098">
    <property type="entry name" value="Ribonuclease H-like"/>
    <property type="match status" value="1"/>
</dbReference>
<dbReference type="PROSITE" id="PS50879">
    <property type="entry name" value="RNASE_H_1"/>
    <property type="match status" value="1"/>
</dbReference>
<proteinExistence type="inferred from homology"/>
<accession>Q47FN9</accession>